<comment type="function">
    <text>Induces sprouting in endothelial cells through an autocrine and paracrine action.</text>
</comment>
<comment type="interaction">
    <interactant intactId="EBI-15485893">
        <id>Q9UKU9</id>
    </interactant>
    <interactant intactId="EBI-2816428">
        <id>Q8N423</id>
        <label>LILRB2</label>
    </interactant>
    <organismsDiffer>false</organismsDiffer>
    <experiments>5</experiments>
</comment>
<comment type="subcellular location">
    <subcellularLocation>
        <location>Secreted</location>
    </subcellularLocation>
</comment>
<comment type="alternative products">
    <event type="alternative splicing"/>
    <isoform>
        <id>Q9UKU9-1</id>
        <name>1</name>
        <sequence type="displayed"/>
    </isoform>
    <isoform>
        <id>Q9UKU9-2</id>
        <name>2</name>
        <sequence type="described" ref="VSP_056934"/>
    </isoform>
</comment>
<comment type="tissue specificity">
    <text>Widely expressed in heart, small intestine, spleen and stomach. Also found in lower levels in colon, ovary, adrenal gland, skeletal muscle and in prostate.</text>
</comment>
<comment type="PTM">
    <text>N-glycosylated.</text>
</comment>
<proteinExistence type="evidence at protein level"/>
<accession>Q9UKU9</accession>
<accession>Q5JT58</accession>
<accession>Q8NCH7</accession>
<name>ANGL2_HUMAN</name>
<evidence type="ECO:0000255" key="1"/>
<evidence type="ECO:0000255" key="2">
    <source>
        <dbReference type="PROSITE-ProRule" id="PRU00739"/>
    </source>
</evidence>
<evidence type="ECO:0000303" key="3">
    <source>
    </source>
</evidence>
<evidence type="ECO:0007829" key="4">
    <source>
        <dbReference type="PDB" id="6Y41"/>
    </source>
</evidence>
<protein>
    <recommendedName>
        <fullName>Angiopoietin-related protein 2</fullName>
    </recommendedName>
    <alternativeName>
        <fullName>Angiopoietin-like protein 2</fullName>
    </alternativeName>
</protein>
<gene>
    <name type="primary">ANGPTL2</name>
    <name type="synonym">ARP2</name>
    <name type="ORF">UNQ170/PRO196</name>
</gene>
<reference key="1">
    <citation type="journal article" date="1999" name="J. Biol. Chem.">
        <title>Molecular cloning, expression, and characterization of angiopoietin-related protein. angiopoietin-related protein induces endothelial cell sprouting.</title>
        <authorList>
            <person name="Kim I."/>
            <person name="Moon S.-O."/>
            <person name="Koh K.N."/>
            <person name="Kim H."/>
            <person name="Uhm C.-S."/>
            <person name="Kwak H.J."/>
            <person name="Kim N.-G."/>
            <person name="Koh G.Y."/>
        </authorList>
    </citation>
    <scope>NUCLEOTIDE SEQUENCE [MRNA] (ISOFORM 1)</scope>
    <source>
        <tissue>Heart</tissue>
    </source>
</reference>
<reference key="2">
    <citation type="journal article" date="2003" name="Genome Res.">
        <title>The secreted protein discovery initiative (SPDI), a large-scale effort to identify novel human secreted and transmembrane proteins: a bioinformatics assessment.</title>
        <authorList>
            <person name="Clark H.F."/>
            <person name="Gurney A.L."/>
            <person name="Abaya E."/>
            <person name="Baker K."/>
            <person name="Baldwin D.T."/>
            <person name="Brush J."/>
            <person name="Chen J."/>
            <person name="Chow B."/>
            <person name="Chui C."/>
            <person name="Crowley C."/>
            <person name="Currell B."/>
            <person name="Deuel B."/>
            <person name="Dowd P."/>
            <person name="Eaton D."/>
            <person name="Foster J.S."/>
            <person name="Grimaldi C."/>
            <person name="Gu Q."/>
            <person name="Hass P.E."/>
            <person name="Heldens S."/>
            <person name="Huang A."/>
            <person name="Kim H.S."/>
            <person name="Klimowski L."/>
            <person name="Jin Y."/>
            <person name="Johnson S."/>
            <person name="Lee J."/>
            <person name="Lewis L."/>
            <person name="Liao D."/>
            <person name="Mark M.R."/>
            <person name="Robbie E."/>
            <person name="Sanchez C."/>
            <person name="Schoenfeld J."/>
            <person name="Seshagiri S."/>
            <person name="Simmons L."/>
            <person name="Singh J."/>
            <person name="Smith V."/>
            <person name="Stinson J."/>
            <person name="Vagts A."/>
            <person name="Vandlen R.L."/>
            <person name="Watanabe C."/>
            <person name="Wieand D."/>
            <person name="Woods K."/>
            <person name="Xie M.-H."/>
            <person name="Yansura D.G."/>
            <person name="Yi S."/>
            <person name="Yu G."/>
            <person name="Yuan J."/>
            <person name="Zhang M."/>
            <person name="Zhang Z."/>
            <person name="Goddard A.D."/>
            <person name="Wood W.I."/>
            <person name="Godowski P.J."/>
            <person name="Gray A.M."/>
        </authorList>
    </citation>
    <scope>NUCLEOTIDE SEQUENCE [LARGE SCALE MRNA] (ISOFORM 1)</scope>
</reference>
<reference key="3">
    <citation type="journal article" date="2004" name="Nat. Genet.">
        <title>Complete sequencing and characterization of 21,243 full-length human cDNAs.</title>
        <authorList>
            <person name="Ota T."/>
            <person name="Suzuki Y."/>
            <person name="Nishikawa T."/>
            <person name="Otsuki T."/>
            <person name="Sugiyama T."/>
            <person name="Irie R."/>
            <person name="Wakamatsu A."/>
            <person name="Hayashi K."/>
            <person name="Sato H."/>
            <person name="Nagai K."/>
            <person name="Kimura K."/>
            <person name="Makita H."/>
            <person name="Sekine M."/>
            <person name="Obayashi M."/>
            <person name="Nishi T."/>
            <person name="Shibahara T."/>
            <person name="Tanaka T."/>
            <person name="Ishii S."/>
            <person name="Yamamoto J."/>
            <person name="Saito K."/>
            <person name="Kawai Y."/>
            <person name="Isono Y."/>
            <person name="Nakamura Y."/>
            <person name="Nagahari K."/>
            <person name="Murakami K."/>
            <person name="Yasuda T."/>
            <person name="Iwayanagi T."/>
            <person name="Wagatsuma M."/>
            <person name="Shiratori A."/>
            <person name="Sudo H."/>
            <person name="Hosoiri T."/>
            <person name="Kaku Y."/>
            <person name="Kodaira H."/>
            <person name="Kondo H."/>
            <person name="Sugawara M."/>
            <person name="Takahashi M."/>
            <person name="Kanda K."/>
            <person name="Yokoi T."/>
            <person name="Furuya T."/>
            <person name="Kikkawa E."/>
            <person name="Omura Y."/>
            <person name="Abe K."/>
            <person name="Kamihara K."/>
            <person name="Katsuta N."/>
            <person name="Sato K."/>
            <person name="Tanikawa M."/>
            <person name="Yamazaki M."/>
            <person name="Ninomiya K."/>
            <person name="Ishibashi T."/>
            <person name="Yamashita H."/>
            <person name="Murakawa K."/>
            <person name="Fujimori K."/>
            <person name="Tanai H."/>
            <person name="Kimata M."/>
            <person name="Watanabe M."/>
            <person name="Hiraoka S."/>
            <person name="Chiba Y."/>
            <person name="Ishida S."/>
            <person name="Ono Y."/>
            <person name="Takiguchi S."/>
            <person name="Watanabe S."/>
            <person name="Yosida M."/>
            <person name="Hotuta T."/>
            <person name="Kusano J."/>
            <person name="Kanehori K."/>
            <person name="Takahashi-Fujii A."/>
            <person name="Hara H."/>
            <person name="Tanase T.-O."/>
            <person name="Nomura Y."/>
            <person name="Togiya S."/>
            <person name="Komai F."/>
            <person name="Hara R."/>
            <person name="Takeuchi K."/>
            <person name="Arita M."/>
            <person name="Imose N."/>
            <person name="Musashino K."/>
            <person name="Yuuki H."/>
            <person name="Oshima A."/>
            <person name="Sasaki N."/>
            <person name="Aotsuka S."/>
            <person name="Yoshikawa Y."/>
            <person name="Matsunawa H."/>
            <person name="Ichihara T."/>
            <person name="Shiohata N."/>
            <person name="Sano S."/>
            <person name="Moriya S."/>
            <person name="Momiyama H."/>
            <person name="Satoh N."/>
            <person name="Takami S."/>
            <person name="Terashima Y."/>
            <person name="Suzuki O."/>
            <person name="Nakagawa S."/>
            <person name="Senoh A."/>
            <person name="Mizoguchi H."/>
            <person name="Goto Y."/>
            <person name="Shimizu F."/>
            <person name="Wakebe H."/>
            <person name="Hishigaki H."/>
            <person name="Watanabe T."/>
            <person name="Sugiyama A."/>
            <person name="Takemoto M."/>
            <person name="Kawakami B."/>
            <person name="Yamazaki M."/>
            <person name="Watanabe K."/>
            <person name="Kumagai A."/>
            <person name="Itakura S."/>
            <person name="Fukuzumi Y."/>
            <person name="Fujimori Y."/>
            <person name="Komiyama M."/>
            <person name="Tashiro H."/>
            <person name="Tanigami A."/>
            <person name="Fujiwara T."/>
            <person name="Ono T."/>
            <person name="Yamada K."/>
            <person name="Fujii Y."/>
            <person name="Ozaki K."/>
            <person name="Hirao M."/>
            <person name="Ohmori Y."/>
            <person name="Kawabata A."/>
            <person name="Hikiji T."/>
            <person name="Kobatake N."/>
            <person name="Inagaki H."/>
            <person name="Ikema Y."/>
            <person name="Okamoto S."/>
            <person name="Okitani R."/>
            <person name="Kawakami T."/>
            <person name="Noguchi S."/>
            <person name="Itoh T."/>
            <person name="Shigeta K."/>
            <person name="Senba T."/>
            <person name="Matsumura K."/>
            <person name="Nakajima Y."/>
            <person name="Mizuno T."/>
            <person name="Morinaga M."/>
            <person name="Sasaki M."/>
            <person name="Togashi T."/>
            <person name="Oyama M."/>
            <person name="Hata H."/>
            <person name="Watanabe M."/>
            <person name="Komatsu T."/>
            <person name="Mizushima-Sugano J."/>
            <person name="Satoh T."/>
            <person name="Shirai Y."/>
            <person name="Takahashi Y."/>
            <person name="Nakagawa K."/>
            <person name="Okumura K."/>
            <person name="Nagase T."/>
            <person name="Nomura N."/>
            <person name="Kikuchi H."/>
            <person name="Masuho Y."/>
            <person name="Yamashita R."/>
            <person name="Nakai K."/>
            <person name="Yada T."/>
            <person name="Nakamura Y."/>
            <person name="Ohara O."/>
            <person name="Isogai T."/>
            <person name="Sugano S."/>
        </authorList>
    </citation>
    <scope>NUCLEOTIDE SEQUENCE [LARGE SCALE MRNA] (ISOFORM 2)</scope>
</reference>
<reference key="4">
    <citation type="journal article" date="2004" name="Nature">
        <title>DNA sequence and analysis of human chromosome 9.</title>
        <authorList>
            <person name="Humphray S.J."/>
            <person name="Oliver K."/>
            <person name="Hunt A.R."/>
            <person name="Plumb R.W."/>
            <person name="Loveland J.E."/>
            <person name="Howe K.L."/>
            <person name="Andrews T.D."/>
            <person name="Searle S."/>
            <person name="Hunt S.E."/>
            <person name="Scott C.E."/>
            <person name="Jones M.C."/>
            <person name="Ainscough R."/>
            <person name="Almeida J.P."/>
            <person name="Ambrose K.D."/>
            <person name="Ashwell R.I.S."/>
            <person name="Babbage A.K."/>
            <person name="Babbage S."/>
            <person name="Bagguley C.L."/>
            <person name="Bailey J."/>
            <person name="Banerjee R."/>
            <person name="Barker D.J."/>
            <person name="Barlow K.F."/>
            <person name="Bates K."/>
            <person name="Beasley H."/>
            <person name="Beasley O."/>
            <person name="Bird C.P."/>
            <person name="Bray-Allen S."/>
            <person name="Brown A.J."/>
            <person name="Brown J.Y."/>
            <person name="Burford D."/>
            <person name="Burrill W."/>
            <person name="Burton J."/>
            <person name="Carder C."/>
            <person name="Carter N.P."/>
            <person name="Chapman J.C."/>
            <person name="Chen Y."/>
            <person name="Clarke G."/>
            <person name="Clark S.Y."/>
            <person name="Clee C.M."/>
            <person name="Clegg S."/>
            <person name="Collier R.E."/>
            <person name="Corby N."/>
            <person name="Crosier M."/>
            <person name="Cummings A.T."/>
            <person name="Davies J."/>
            <person name="Dhami P."/>
            <person name="Dunn M."/>
            <person name="Dutta I."/>
            <person name="Dyer L.W."/>
            <person name="Earthrowl M.E."/>
            <person name="Faulkner L."/>
            <person name="Fleming C.J."/>
            <person name="Frankish A."/>
            <person name="Frankland J.A."/>
            <person name="French L."/>
            <person name="Fricker D.G."/>
            <person name="Garner P."/>
            <person name="Garnett J."/>
            <person name="Ghori J."/>
            <person name="Gilbert J.G.R."/>
            <person name="Glison C."/>
            <person name="Grafham D.V."/>
            <person name="Gribble S."/>
            <person name="Griffiths C."/>
            <person name="Griffiths-Jones S."/>
            <person name="Grocock R."/>
            <person name="Guy J."/>
            <person name="Hall R.E."/>
            <person name="Hammond S."/>
            <person name="Harley J.L."/>
            <person name="Harrison E.S.I."/>
            <person name="Hart E.A."/>
            <person name="Heath P.D."/>
            <person name="Henderson C.D."/>
            <person name="Hopkins B.L."/>
            <person name="Howard P.J."/>
            <person name="Howden P.J."/>
            <person name="Huckle E."/>
            <person name="Johnson C."/>
            <person name="Johnson D."/>
            <person name="Joy A.A."/>
            <person name="Kay M."/>
            <person name="Keenan S."/>
            <person name="Kershaw J.K."/>
            <person name="Kimberley A.M."/>
            <person name="King A."/>
            <person name="Knights A."/>
            <person name="Laird G.K."/>
            <person name="Langford C."/>
            <person name="Lawlor S."/>
            <person name="Leongamornlert D.A."/>
            <person name="Leversha M."/>
            <person name="Lloyd C."/>
            <person name="Lloyd D.M."/>
            <person name="Lovell J."/>
            <person name="Martin S."/>
            <person name="Mashreghi-Mohammadi M."/>
            <person name="Matthews L."/>
            <person name="McLaren S."/>
            <person name="McLay K.E."/>
            <person name="McMurray A."/>
            <person name="Milne S."/>
            <person name="Nickerson T."/>
            <person name="Nisbett J."/>
            <person name="Nordsiek G."/>
            <person name="Pearce A.V."/>
            <person name="Peck A.I."/>
            <person name="Porter K.M."/>
            <person name="Pandian R."/>
            <person name="Pelan S."/>
            <person name="Phillimore B."/>
            <person name="Povey S."/>
            <person name="Ramsey Y."/>
            <person name="Rand V."/>
            <person name="Scharfe M."/>
            <person name="Sehra H.K."/>
            <person name="Shownkeen R."/>
            <person name="Sims S.K."/>
            <person name="Skuce C.D."/>
            <person name="Smith M."/>
            <person name="Steward C.A."/>
            <person name="Swarbreck D."/>
            <person name="Sycamore N."/>
            <person name="Tester J."/>
            <person name="Thorpe A."/>
            <person name="Tracey A."/>
            <person name="Tromans A."/>
            <person name="Thomas D.W."/>
            <person name="Wall M."/>
            <person name="Wallis J.M."/>
            <person name="West A.P."/>
            <person name="Whitehead S.L."/>
            <person name="Willey D.L."/>
            <person name="Williams S.A."/>
            <person name="Wilming L."/>
            <person name="Wray P.W."/>
            <person name="Young L."/>
            <person name="Ashurst J.L."/>
            <person name="Coulson A."/>
            <person name="Blocker H."/>
            <person name="Durbin R.M."/>
            <person name="Sulston J.E."/>
            <person name="Hubbard T."/>
            <person name="Jackson M.J."/>
            <person name="Bentley D.R."/>
            <person name="Beck S."/>
            <person name="Rogers J."/>
            <person name="Dunham I."/>
        </authorList>
    </citation>
    <scope>NUCLEOTIDE SEQUENCE [LARGE SCALE GENOMIC DNA]</scope>
</reference>
<reference key="5">
    <citation type="submission" date="2005-07" db="EMBL/GenBank/DDBJ databases">
        <authorList>
            <person name="Mural R.J."/>
            <person name="Istrail S."/>
            <person name="Sutton G."/>
            <person name="Florea L."/>
            <person name="Halpern A.L."/>
            <person name="Mobarry C.M."/>
            <person name="Lippert R."/>
            <person name="Walenz B."/>
            <person name="Shatkay H."/>
            <person name="Dew I."/>
            <person name="Miller J.R."/>
            <person name="Flanigan M.J."/>
            <person name="Edwards N.J."/>
            <person name="Bolanos R."/>
            <person name="Fasulo D."/>
            <person name="Halldorsson B.V."/>
            <person name="Hannenhalli S."/>
            <person name="Turner R."/>
            <person name="Yooseph S."/>
            <person name="Lu F."/>
            <person name="Nusskern D.R."/>
            <person name="Shue B.C."/>
            <person name="Zheng X.H."/>
            <person name="Zhong F."/>
            <person name="Delcher A.L."/>
            <person name="Huson D.H."/>
            <person name="Kravitz S.A."/>
            <person name="Mouchard L."/>
            <person name="Reinert K."/>
            <person name="Remington K.A."/>
            <person name="Clark A.G."/>
            <person name="Waterman M.S."/>
            <person name="Eichler E.E."/>
            <person name="Adams M.D."/>
            <person name="Hunkapiller M.W."/>
            <person name="Myers E.W."/>
            <person name="Venter J.C."/>
        </authorList>
    </citation>
    <scope>NUCLEOTIDE SEQUENCE [LARGE SCALE GENOMIC DNA]</scope>
</reference>
<reference key="6">
    <citation type="journal article" date="2004" name="Genome Res.">
        <title>The status, quality, and expansion of the NIH full-length cDNA project: the Mammalian Gene Collection (MGC).</title>
        <authorList>
            <consortium name="The MGC Project Team"/>
        </authorList>
    </citation>
    <scope>NUCLEOTIDE SEQUENCE [LARGE SCALE MRNA] (ISOFORM 1)</scope>
    <source>
        <tissue>Ovary</tissue>
    </source>
</reference>
<dbReference type="EMBL" id="AF125175">
    <property type="protein sequence ID" value="AAD55357.1"/>
    <property type="molecule type" value="mRNA"/>
</dbReference>
<dbReference type="EMBL" id="AY358274">
    <property type="protein sequence ID" value="AAQ88641.1"/>
    <property type="molecule type" value="mRNA"/>
</dbReference>
<dbReference type="EMBL" id="AK074726">
    <property type="protein sequence ID" value="BAC11164.1"/>
    <property type="molecule type" value="mRNA"/>
</dbReference>
<dbReference type="EMBL" id="AL356862">
    <property type="status" value="NOT_ANNOTATED_CDS"/>
    <property type="molecule type" value="Genomic_DNA"/>
</dbReference>
<dbReference type="EMBL" id="CH471090">
    <property type="protein sequence ID" value="EAW87651.1"/>
    <property type="molecule type" value="Genomic_DNA"/>
</dbReference>
<dbReference type="EMBL" id="BC012368">
    <property type="protein sequence ID" value="AAH12368.1"/>
    <property type="molecule type" value="mRNA"/>
</dbReference>
<dbReference type="CCDS" id="CCDS6868.1">
    <molecule id="Q9UKU9-1"/>
</dbReference>
<dbReference type="RefSeq" id="NP_036230.1">
    <molecule id="Q9UKU9-1"/>
    <property type="nucleotide sequence ID" value="NM_012098.3"/>
</dbReference>
<dbReference type="PDB" id="6Y41">
    <property type="method" value="X-ray"/>
    <property type="resolution" value="1.79 A"/>
    <property type="chains" value="A/B/C/D/E/F/G/H/I/J/K/L/M/N/O/P=269-493"/>
</dbReference>
<dbReference type="PDBsum" id="6Y41"/>
<dbReference type="SMR" id="Q9UKU9"/>
<dbReference type="BioGRID" id="117018">
    <property type="interactions" value="7"/>
</dbReference>
<dbReference type="DIP" id="DIP-59886N"/>
<dbReference type="FunCoup" id="Q9UKU9">
    <property type="interactions" value="220"/>
</dbReference>
<dbReference type="IntAct" id="Q9UKU9">
    <property type="interactions" value="6"/>
</dbReference>
<dbReference type="STRING" id="9606.ENSP00000362524"/>
<dbReference type="UniLectin" id="Q9UKU9"/>
<dbReference type="GlyConnect" id="1009">
    <property type="glycosylation" value="9 N-Linked glycans (2 sites)"/>
</dbReference>
<dbReference type="GlyCosmos" id="Q9UKU9">
    <property type="glycosylation" value="3 sites, 10 glycans"/>
</dbReference>
<dbReference type="GlyGen" id="Q9UKU9">
    <property type="glycosylation" value="6 sites, 51 N-linked glycans (2 sites), 3 O-linked glycans (3 sites)"/>
</dbReference>
<dbReference type="iPTMnet" id="Q9UKU9"/>
<dbReference type="PhosphoSitePlus" id="Q9UKU9"/>
<dbReference type="BioMuta" id="ANGPTL2"/>
<dbReference type="DMDM" id="13626119"/>
<dbReference type="jPOST" id="Q9UKU9"/>
<dbReference type="MassIVE" id="Q9UKU9"/>
<dbReference type="PaxDb" id="9606-ENSP00000362524"/>
<dbReference type="PeptideAtlas" id="Q9UKU9"/>
<dbReference type="ProteomicsDB" id="72896"/>
<dbReference type="ProteomicsDB" id="84880">
    <molecule id="Q9UKU9-1"/>
</dbReference>
<dbReference type="Antibodypedia" id="30639">
    <property type="antibodies" value="289 antibodies from 31 providers"/>
</dbReference>
<dbReference type="DNASU" id="23452"/>
<dbReference type="Ensembl" id="ENST00000373417.1">
    <molecule id="Q9UKU9-2"/>
    <property type="protein sequence ID" value="ENSP00000362516.1"/>
    <property type="gene ID" value="ENSG00000136859.10"/>
</dbReference>
<dbReference type="Ensembl" id="ENST00000373425.8">
    <molecule id="Q9UKU9-1"/>
    <property type="protein sequence ID" value="ENSP00000362524.3"/>
    <property type="gene ID" value="ENSG00000136859.10"/>
</dbReference>
<dbReference type="GeneID" id="23452"/>
<dbReference type="KEGG" id="hsa:23452"/>
<dbReference type="MANE-Select" id="ENST00000373425.8">
    <property type="protein sequence ID" value="ENSP00000362524.3"/>
    <property type="RefSeq nucleotide sequence ID" value="NM_012098.3"/>
    <property type="RefSeq protein sequence ID" value="NP_036230.1"/>
</dbReference>
<dbReference type="UCSC" id="uc004bqr.2">
    <molecule id="Q9UKU9-1"/>
    <property type="organism name" value="human"/>
</dbReference>
<dbReference type="AGR" id="HGNC:490"/>
<dbReference type="CTD" id="23452"/>
<dbReference type="DisGeNET" id="23452"/>
<dbReference type="GeneCards" id="ANGPTL2"/>
<dbReference type="HGNC" id="HGNC:490">
    <property type="gene designation" value="ANGPTL2"/>
</dbReference>
<dbReference type="HPA" id="ENSG00000136859">
    <property type="expression patterns" value="Low tissue specificity"/>
</dbReference>
<dbReference type="MIM" id="605001">
    <property type="type" value="gene"/>
</dbReference>
<dbReference type="neXtProt" id="NX_Q9UKU9"/>
<dbReference type="OpenTargets" id="ENSG00000136859"/>
<dbReference type="PharmGKB" id="PA24795"/>
<dbReference type="VEuPathDB" id="HostDB:ENSG00000136859"/>
<dbReference type="eggNOG" id="KOG2579">
    <property type="taxonomic scope" value="Eukaryota"/>
</dbReference>
<dbReference type="GeneTree" id="ENSGT00940000155946"/>
<dbReference type="HOGENOM" id="CLU_038628_0_0_1"/>
<dbReference type="InParanoid" id="Q9UKU9"/>
<dbReference type="OMA" id="CVTYWWL"/>
<dbReference type="OrthoDB" id="7735550at2759"/>
<dbReference type="PAN-GO" id="Q9UKU9">
    <property type="GO annotations" value="3 GO annotations based on evolutionary models"/>
</dbReference>
<dbReference type="PhylomeDB" id="Q9UKU9"/>
<dbReference type="TreeFam" id="TF336658"/>
<dbReference type="PathwayCommons" id="Q9UKU9"/>
<dbReference type="SignaLink" id="Q9UKU9"/>
<dbReference type="BioGRID-ORCS" id="23452">
    <property type="hits" value="13 hits in 1146 CRISPR screens"/>
</dbReference>
<dbReference type="GeneWiki" id="ANGPTL2"/>
<dbReference type="GenomeRNAi" id="23452"/>
<dbReference type="Pharos" id="Q9UKU9">
    <property type="development level" value="Tbio"/>
</dbReference>
<dbReference type="PRO" id="PR:Q9UKU9"/>
<dbReference type="Proteomes" id="UP000005640">
    <property type="component" value="Chromosome 9"/>
</dbReference>
<dbReference type="RNAct" id="Q9UKU9">
    <property type="molecule type" value="protein"/>
</dbReference>
<dbReference type="Bgee" id="ENSG00000136859">
    <property type="expression patterns" value="Expressed in tendon of biceps brachii and 177 other cell types or tissues"/>
</dbReference>
<dbReference type="ExpressionAtlas" id="Q9UKU9">
    <property type="expression patterns" value="baseline and differential"/>
</dbReference>
<dbReference type="GO" id="GO:0062023">
    <property type="term" value="C:collagen-containing extracellular matrix"/>
    <property type="evidence" value="ECO:0007005"/>
    <property type="project" value="BHF-UCL"/>
</dbReference>
<dbReference type="GO" id="GO:0070062">
    <property type="term" value="C:extracellular exosome"/>
    <property type="evidence" value="ECO:0007005"/>
    <property type="project" value="UniProtKB"/>
</dbReference>
<dbReference type="GO" id="GO:0005615">
    <property type="term" value="C:extracellular space"/>
    <property type="evidence" value="ECO:0000318"/>
    <property type="project" value="GO_Central"/>
</dbReference>
<dbReference type="GO" id="GO:0005102">
    <property type="term" value="F:signaling receptor binding"/>
    <property type="evidence" value="ECO:0000318"/>
    <property type="project" value="GO_Central"/>
</dbReference>
<dbReference type="GO" id="GO:0007596">
    <property type="term" value="P:blood coagulation"/>
    <property type="evidence" value="ECO:0007669"/>
    <property type="project" value="InterPro"/>
</dbReference>
<dbReference type="GO" id="GO:0007267">
    <property type="term" value="P:cell-cell signaling"/>
    <property type="evidence" value="ECO:0000304"/>
    <property type="project" value="ProtInc"/>
</dbReference>
<dbReference type="CDD" id="cd00087">
    <property type="entry name" value="FReD"/>
    <property type="match status" value="1"/>
</dbReference>
<dbReference type="FunFam" id="3.90.215.10:FF:000001">
    <property type="entry name" value="Tenascin isoform 1"/>
    <property type="match status" value="1"/>
</dbReference>
<dbReference type="Gene3D" id="3.90.215.10">
    <property type="entry name" value="Gamma Fibrinogen, chain A, domain 1"/>
    <property type="match status" value="1"/>
</dbReference>
<dbReference type="InterPro" id="IPR037579">
    <property type="entry name" value="FIB_ANG-like"/>
</dbReference>
<dbReference type="InterPro" id="IPR036056">
    <property type="entry name" value="Fibrinogen-like_C"/>
</dbReference>
<dbReference type="InterPro" id="IPR014716">
    <property type="entry name" value="Fibrinogen_a/b/g_C_1"/>
</dbReference>
<dbReference type="InterPro" id="IPR002181">
    <property type="entry name" value="Fibrinogen_a/b/g_C_dom"/>
</dbReference>
<dbReference type="InterPro" id="IPR020837">
    <property type="entry name" value="Fibrinogen_CS"/>
</dbReference>
<dbReference type="PANTHER" id="PTHR47221">
    <property type="entry name" value="FIBRINOGEN ALPHA CHAIN"/>
    <property type="match status" value="1"/>
</dbReference>
<dbReference type="PANTHER" id="PTHR47221:SF6">
    <property type="entry name" value="FIBRINOGEN ALPHA CHAIN"/>
    <property type="match status" value="1"/>
</dbReference>
<dbReference type="Pfam" id="PF00147">
    <property type="entry name" value="Fibrinogen_C"/>
    <property type="match status" value="1"/>
</dbReference>
<dbReference type="SMART" id="SM00186">
    <property type="entry name" value="FBG"/>
    <property type="match status" value="1"/>
</dbReference>
<dbReference type="SUPFAM" id="SSF56496">
    <property type="entry name" value="Fibrinogen C-terminal domain-like"/>
    <property type="match status" value="1"/>
</dbReference>
<dbReference type="PROSITE" id="PS00514">
    <property type="entry name" value="FIBRINOGEN_C_1"/>
    <property type="match status" value="1"/>
</dbReference>
<dbReference type="PROSITE" id="PS51406">
    <property type="entry name" value="FIBRINOGEN_C_2"/>
    <property type="match status" value="1"/>
</dbReference>
<organism>
    <name type="scientific">Homo sapiens</name>
    <name type="common">Human</name>
    <dbReference type="NCBI Taxonomy" id="9606"/>
    <lineage>
        <taxon>Eukaryota</taxon>
        <taxon>Metazoa</taxon>
        <taxon>Chordata</taxon>
        <taxon>Craniata</taxon>
        <taxon>Vertebrata</taxon>
        <taxon>Euteleostomi</taxon>
        <taxon>Mammalia</taxon>
        <taxon>Eutheria</taxon>
        <taxon>Euarchontoglires</taxon>
        <taxon>Primates</taxon>
        <taxon>Haplorrhini</taxon>
        <taxon>Catarrhini</taxon>
        <taxon>Hominidae</taxon>
        <taxon>Homo</taxon>
    </lineage>
</organism>
<keyword id="KW-0002">3D-structure</keyword>
<keyword id="KW-0025">Alternative splicing</keyword>
<keyword id="KW-0175">Coiled coil</keyword>
<keyword id="KW-1015">Disulfide bond</keyword>
<keyword id="KW-0325">Glycoprotein</keyword>
<keyword id="KW-1267">Proteomics identification</keyword>
<keyword id="KW-1185">Reference proteome</keyword>
<keyword id="KW-0964">Secreted</keyword>
<keyword id="KW-0732">Signal</keyword>
<sequence length="493" mass="57104">MRPLCVTCWWLGLLAAMGAVAGQEDGFEGTEEGSPREFIYLNRYKRAGESQDKCTYTFIVPQQRVTGAICVNSKEPEVLLENRVHKQELELLNNELLKQKRQIETLQQLVEVDGGIVSEVKLLRKESRNMNSRVTQLYMQLLHEIIRKRDNALELSQLENRILNQTADMLQLASKYKDLEHKYQHLATLAHNQSEIIAQLEEHCQRVPSARPVPQPPPAAPPRVYQPPTYNRIINQISTNEIQSDQNLKVLPPPLPTMPTLTSLPSSTDKPSGPWRDCLQALEDGHDTSSIYLVKPENTNRLMQVWCDQRHDPGGWTVIQRRLDGSVNFFRNWETYKQGFGNIDGEYWLGLENIYWLTNQGNYKLLVTMEDWSGRKVFAEYASFRLEPESEYYKLRLGRYHGNAGDSFTWHNGKQFTTLDRDHDVYTGNCAHYQKGGWWYNACAHSNLNGVWYRGGHYRSRYQDGVYWAEFRGGSYSLKKVVMMIRPNPNTFH</sequence>
<feature type="signal peptide" evidence="1">
    <location>
        <begin position="1"/>
        <end position="22"/>
    </location>
</feature>
<feature type="chain" id="PRO_0000009120" description="Angiopoietin-related protein 2">
    <location>
        <begin position="23"/>
        <end position="493"/>
    </location>
</feature>
<feature type="domain" description="Fibrinogen C-terminal" evidence="2">
    <location>
        <begin position="269"/>
        <end position="489"/>
    </location>
</feature>
<feature type="coiled-coil region" evidence="1">
    <location>
        <begin position="76"/>
        <end position="115"/>
    </location>
</feature>
<feature type="coiled-coil region" evidence="1">
    <location>
        <begin position="152"/>
        <end position="206"/>
    </location>
</feature>
<feature type="glycosylation site" description="N-linked (GlcNAc...) asparagine" evidence="1">
    <location>
        <position position="164"/>
    </location>
</feature>
<feature type="glycosylation site" description="N-linked (GlcNAc...) asparagine" evidence="1">
    <location>
        <position position="192"/>
    </location>
</feature>
<feature type="disulfide bond" evidence="2">
    <location>
        <begin position="278"/>
        <end position="307"/>
    </location>
</feature>
<feature type="disulfide bond" evidence="2">
    <location>
        <begin position="430"/>
        <end position="443"/>
    </location>
</feature>
<feature type="splice variant" id="VSP_056934" description="In isoform 2." evidence="3">
    <location>
        <begin position="1"/>
        <end position="302"/>
    </location>
</feature>
<feature type="strand" evidence="4">
    <location>
        <begin position="275"/>
        <end position="277"/>
    </location>
</feature>
<feature type="helix" evidence="4">
    <location>
        <begin position="278"/>
        <end position="283"/>
    </location>
</feature>
<feature type="strand" evidence="4">
    <location>
        <begin position="290"/>
        <end position="294"/>
    </location>
</feature>
<feature type="strand" evidence="4">
    <location>
        <begin position="303"/>
        <end position="308"/>
    </location>
</feature>
<feature type="strand" evidence="4">
    <location>
        <begin position="316"/>
        <end position="325"/>
    </location>
</feature>
<feature type="helix" evidence="4">
    <location>
        <begin position="333"/>
        <end position="338"/>
    </location>
</feature>
<feature type="strand" evidence="4">
    <location>
        <begin position="345"/>
        <end position="348"/>
    </location>
</feature>
<feature type="helix" evidence="4">
    <location>
        <begin position="351"/>
        <end position="358"/>
    </location>
</feature>
<feature type="strand" evidence="4">
    <location>
        <begin position="363"/>
        <end position="370"/>
    </location>
</feature>
<feature type="strand" evidence="4">
    <location>
        <begin position="376"/>
        <end position="382"/>
    </location>
</feature>
<feature type="strand" evidence="4">
    <location>
        <begin position="384"/>
        <end position="386"/>
    </location>
</feature>
<feature type="helix" evidence="4">
    <location>
        <begin position="389"/>
        <end position="391"/>
    </location>
</feature>
<feature type="strand" evidence="4">
    <location>
        <begin position="395"/>
        <end position="397"/>
    </location>
</feature>
<feature type="strand" evidence="4">
    <location>
        <begin position="400"/>
        <end position="404"/>
    </location>
</feature>
<feature type="helix" evidence="4">
    <location>
        <begin position="409"/>
        <end position="411"/>
    </location>
</feature>
<feature type="strand" evidence="4">
    <location>
        <begin position="424"/>
        <end position="428"/>
    </location>
</feature>
<feature type="helix" evidence="4">
    <location>
        <begin position="431"/>
        <end position="434"/>
    </location>
</feature>
<feature type="strand" evidence="4">
    <location>
        <begin position="441"/>
        <end position="443"/>
    </location>
</feature>
<feature type="helix" evidence="4">
    <location>
        <begin position="469"/>
        <end position="472"/>
    </location>
</feature>
<feature type="strand" evidence="4">
    <location>
        <begin position="479"/>
        <end position="487"/>
    </location>
</feature>